<dbReference type="EC" id="2.7.7.48" evidence="2"/>
<dbReference type="EMBL" id="CY013277">
    <property type="protein sequence ID" value="ABI20834.1"/>
    <property type="molecule type" value="Other_RNA"/>
</dbReference>
<dbReference type="SMR" id="Q0HD52"/>
<dbReference type="Proteomes" id="UP000156248">
    <property type="component" value="Genome"/>
</dbReference>
<dbReference type="GO" id="GO:0030430">
    <property type="term" value="C:host cell cytoplasm"/>
    <property type="evidence" value="ECO:0007669"/>
    <property type="project" value="UniProtKB-SubCell"/>
</dbReference>
<dbReference type="GO" id="GO:0042025">
    <property type="term" value="C:host cell nucleus"/>
    <property type="evidence" value="ECO:0007669"/>
    <property type="project" value="UniProtKB-SubCell"/>
</dbReference>
<dbReference type="GO" id="GO:0000166">
    <property type="term" value="F:nucleotide binding"/>
    <property type="evidence" value="ECO:0007669"/>
    <property type="project" value="UniProtKB-UniRule"/>
</dbReference>
<dbReference type="GO" id="GO:0003723">
    <property type="term" value="F:RNA binding"/>
    <property type="evidence" value="ECO:0007669"/>
    <property type="project" value="InterPro"/>
</dbReference>
<dbReference type="GO" id="GO:0003968">
    <property type="term" value="F:RNA-directed RNA polymerase activity"/>
    <property type="evidence" value="ECO:0007669"/>
    <property type="project" value="UniProtKB-UniRule"/>
</dbReference>
<dbReference type="GO" id="GO:0006351">
    <property type="term" value="P:DNA-templated transcription"/>
    <property type="evidence" value="ECO:0007669"/>
    <property type="project" value="UniProtKB-UniRule"/>
</dbReference>
<dbReference type="GO" id="GO:0039657">
    <property type="term" value="P:symbiont-mediated suppression of host gene expression"/>
    <property type="evidence" value="ECO:0007669"/>
    <property type="project" value="UniProtKB-KW"/>
</dbReference>
<dbReference type="GO" id="GO:0039523">
    <property type="term" value="P:symbiont-mediated suppression of host mRNA transcription via inhibition of RNA polymerase II activity"/>
    <property type="evidence" value="ECO:0007669"/>
    <property type="project" value="UniProtKB-UniRule"/>
</dbReference>
<dbReference type="GO" id="GO:0039694">
    <property type="term" value="P:viral RNA genome replication"/>
    <property type="evidence" value="ECO:0007669"/>
    <property type="project" value="UniProtKB-UniRule"/>
</dbReference>
<dbReference type="GO" id="GO:0019083">
    <property type="term" value="P:viral transcription"/>
    <property type="evidence" value="ECO:0007669"/>
    <property type="project" value="UniProtKB-KW"/>
</dbReference>
<dbReference type="Gene3D" id="6.10.140.720">
    <property type="match status" value="1"/>
</dbReference>
<dbReference type="HAMAP" id="MF_04065">
    <property type="entry name" value="INFV_RDRP"/>
    <property type="match status" value="1"/>
</dbReference>
<dbReference type="InterPro" id="IPR007099">
    <property type="entry name" value="RNA-dir_pol_NSvirus"/>
</dbReference>
<dbReference type="InterPro" id="IPR001407">
    <property type="entry name" value="RNA_pol_PB1_influenza"/>
</dbReference>
<dbReference type="Pfam" id="PF00602">
    <property type="entry name" value="Flu_PB1"/>
    <property type="match status" value="1"/>
</dbReference>
<dbReference type="PIRSF" id="PIRSF000827">
    <property type="entry name" value="RdRPol_OMV"/>
    <property type="match status" value="1"/>
</dbReference>
<dbReference type="PROSITE" id="PS50525">
    <property type="entry name" value="RDRP_SSRNA_NEG_SEG"/>
    <property type="match status" value="1"/>
</dbReference>
<organism>
    <name type="scientific">Influenza A virus (strain A/Hickox/1940 H1N1)</name>
    <dbReference type="NCBI Taxonomy" id="383543"/>
    <lineage>
        <taxon>Viruses</taxon>
        <taxon>Riboviria</taxon>
        <taxon>Orthornavirae</taxon>
        <taxon>Negarnaviricota</taxon>
        <taxon>Polyploviricotina</taxon>
        <taxon>Insthoviricetes</taxon>
        <taxon>Articulavirales</taxon>
        <taxon>Orthomyxoviridae</taxon>
        <taxon>Alphainfluenzavirus</taxon>
        <taxon>Alphainfluenzavirus influenzae</taxon>
        <taxon>Influenza A virus</taxon>
    </lineage>
</organism>
<organismHost>
    <name type="scientific">Aves</name>
    <dbReference type="NCBI Taxonomy" id="8782"/>
</organismHost>
<organismHost>
    <name type="scientific">Homo sapiens</name>
    <name type="common">Human</name>
    <dbReference type="NCBI Taxonomy" id="9606"/>
</organismHost>
<organismHost>
    <name type="scientific">Sus scrofa</name>
    <name type="common">Pig</name>
    <dbReference type="NCBI Taxonomy" id="9823"/>
</organismHost>
<feature type="chain" id="PRO_0000373048" description="RNA-directed RNA polymerase catalytic subunit">
    <location>
        <begin position="1"/>
        <end position="757"/>
    </location>
</feature>
<feature type="domain" description="RdRp catalytic" evidence="2">
    <location>
        <begin position="286"/>
        <end position="483"/>
    </location>
</feature>
<feature type="region of interest" description="Disordered" evidence="3">
    <location>
        <begin position="53"/>
        <end position="82"/>
    </location>
</feature>
<feature type="region of interest" description="Promoter-binding site" evidence="2">
    <location>
        <begin position="249"/>
        <end position="256"/>
    </location>
</feature>
<feature type="short sequence motif" description="Nuclear localization signal" evidence="2">
    <location>
        <begin position="187"/>
        <end position="195"/>
    </location>
</feature>
<feature type="short sequence motif" description="Nuclear localization signal" evidence="2">
    <location>
        <begin position="203"/>
        <end position="216"/>
    </location>
</feature>
<feature type="compositionally biased region" description="Polar residues" evidence="3">
    <location>
        <begin position="55"/>
        <end position="64"/>
    </location>
</feature>
<gene>
    <name evidence="2" type="primary">PB1</name>
</gene>
<protein>
    <recommendedName>
        <fullName evidence="2">RNA-directed RNA polymerase catalytic subunit</fullName>
        <ecNumber evidence="2">2.7.7.48</ecNumber>
    </recommendedName>
    <alternativeName>
        <fullName evidence="2">Polymerase basic protein 1</fullName>
        <shortName evidence="2">PB1</shortName>
    </alternativeName>
    <alternativeName>
        <fullName evidence="2">RNA-directed RNA polymerase subunit P1</fullName>
    </alternativeName>
</protein>
<comment type="function">
    <text evidence="2">RNA-dependent RNA polymerase which is responsible for replication and transcription of virus RNA segments. The transcription of viral mRNAs occurs by a unique mechanism called cap-snatching. 5' methylated caps of cellular mRNAs are cleaved after 10-13 nucleotides by PA. In turn, these short capped RNAs are used as primers by PB1 for transcription of viral mRNAs. During virus replication, PB1 initiates RNA synthesis and copy vRNA into complementary RNA (cRNA) which in turn serves as a template for the production of more vRNAs.</text>
</comment>
<comment type="catalytic activity">
    <reaction evidence="2">
        <text>RNA(n) + a ribonucleoside 5'-triphosphate = RNA(n+1) + diphosphate</text>
        <dbReference type="Rhea" id="RHEA:21248"/>
        <dbReference type="Rhea" id="RHEA-COMP:14527"/>
        <dbReference type="Rhea" id="RHEA-COMP:17342"/>
        <dbReference type="ChEBI" id="CHEBI:33019"/>
        <dbReference type="ChEBI" id="CHEBI:61557"/>
        <dbReference type="ChEBI" id="CHEBI:140395"/>
        <dbReference type="EC" id="2.7.7.48"/>
    </reaction>
</comment>
<comment type="subunit">
    <text evidence="1 2">Influenza RNA polymerase is composed of three subunits: PB1, PB2 and PA. Interacts (via N-terminus) with PA (via C-terminus). Interacts (via C-terminus) with PB2 (via N-terminus); this interaction is essential for transcription initiation. Interacts (via C-terminus) with human PKP2 (via N-terminus); the interaction competitively inhibits the interaction between the RNA polymerase subunits PB1 and PB2 (By similarity).</text>
</comment>
<comment type="subcellular location">
    <subcellularLocation>
        <location evidence="2">Host nucleus</location>
    </subcellularLocation>
    <subcellularLocation>
        <location evidence="2">Host cytoplasm</location>
    </subcellularLocation>
</comment>
<comment type="PTM">
    <text evidence="2">Phosphorylated by host PRKCA.</text>
</comment>
<comment type="similarity">
    <text evidence="2">Belongs to the influenza viruses polymerase PB1 family.</text>
</comment>
<name>RDRP_I40A0</name>
<sequence length="757" mass="86668">MDVNPTLLFLKVPAQNAISTTFPYTGDPPYSHGTGTGYTMDTVNRTHQYSERGRWTTNTETGAPQLNPIDGPLPEDNEPSGYAQTDCVLEAMAFLEESHPGIFENSCIETMEVVQQTRVDKLTQGRQTYDWTLNRNQPAATALANTIEVFRSNGLTANESGRLIDFLKDVMESMDKEEMEITTHFQRKRRVRDNVTKKMVTQRTIGKRKQRLNKRSYLIRALTLNTMTKDAERGKLKRRAIATPGMQIRGFVYFVETLARSICEKLEQSGLPVGGNEKKAKLANVVRKMMTNSQDTEISFTITGDNTKWNENQNPRMFLAMITYMTRNQPEWFRNVLSIAPIMFSNKMARLGKGYMFESKSMKLRTQIPAEMLANIDLKYFNDSTRKKIERIRPLLIDGTASLSPGMMMGMFNMLSTVLGVSILNLGQKRYTKTTYWWDGLQSSDDFALIVNAPNHEGIQAGVDRFYRTCKLLGINMSKKKSYINRTGTFEFTSFFYRYGFVANFSMELPSFGVSGINESADMSIGVTVIKNNMINNDLGPATAQMALQLFIKDYRYTYRCHRGDTQIQTRRSFEIKKLWEQTRSKAGLLVSDGGPNLYNIRNLHIPEVCLKWELMDEDYQGRLCNPLNPFVSHKEIESVNNAVMMPAHGPAKNMEYDAVATTHSWIPKRNRSILNTSQRGILEDEQMYQRCCNLFEKFFPSSSYRRPVGISSMVEAMVSRARIDARIDFESGRIKKEEFTEIMKICSTIEELRRQK</sequence>
<evidence type="ECO:0000250" key="1">
    <source>
        <dbReference type="UniProtKB" id="P03431"/>
    </source>
</evidence>
<evidence type="ECO:0000255" key="2">
    <source>
        <dbReference type="HAMAP-Rule" id="MF_04065"/>
    </source>
</evidence>
<evidence type="ECO:0000256" key="3">
    <source>
        <dbReference type="SAM" id="MobiDB-lite"/>
    </source>
</evidence>
<reference key="1">
    <citation type="submission" date="2006-08" db="EMBL/GenBank/DDBJ databases">
        <title>The NIAID influenza genome sequencing project.</title>
        <authorList>
            <person name="Spiro D."/>
            <person name="Ghedin E."/>
            <person name="Sengamalay N."/>
            <person name="Halpin R."/>
            <person name="Boyne A."/>
            <person name="Zaborsky J."/>
            <person name="Feldblyum T."/>
            <person name="Subbu V."/>
            <person name="Sparenborg J."/>
            <person name="Shumway M."/>
            <person name="Sitz J."/>
            <person name="Katzel D."/>
            <person name="Koo H."/>
            <person name="Salzberg S.L."/>
            <person name="Griesemer S."/>
            <person name="St George K."/>
            <person name="Bennett R."/>
            <person name="Taylor J."/>
            <person name="Bennink J.R."/>
            <person name="Yewdell J.W."/>
            <person name="Bao Y."/>
            <person name="Bolotov P."/>
            <person name="Dernovoy D."/>
            <person name="Kiryutin B."/>
            <person name="Lipman D.J."/>
            <person name="Tatusova T."/>
        </authorList>
    </citation>
    <scope>NUCLEOTIDE SEQUENCE [GENOMIC RNA]</scope>
</reference>
<reference key="2">
    <citation type="submission" date="2006-09" db="EMBL/GenBank/DDBJ databases">
        <authorList>
            <consortium name="The NIAID Influenza Genome Sequencing Consortium"/>
        </authorList>
    </citation>
    <scope>NUCLEOTIDE SEQUENCE [GENOMIC RNA]</scope>
</reference>
<accession>Q0HD52</accession>
<proteinExistence type="inferred from homology"/>
<keyword id="KW-1262">Eukaryotic host gene expression shutoff by virus</keyword>
<keyword id="KW-1191">Eukaryotic host transcription shutoff by virus</keyword>
<keyword id="KW-1035">Host cytoplasm</keyword>
<keyword id="KW-1190">Host gene expression shutoff by virus</keyword>
<keyword id="KW-1048">Host nucleus</keyword>
<keyword id="KW-0945">Host-virus interaction</keyword>
<keyword id="KW-1104">Inhibition of host RNA polymerase II by virus</keyword>
<keyword id="KW-0547">Nucleotide-binding</keyword>
<keyword id="KW-0548">Nucleotidyltransferase</keyword>
<keyword id="KW-0597">Phosphoprotein</keyword>
<keyword id="KW-0696">RNA-directed RNA polymerase</keyword>
<keyword id="KW-0808">Transferase</keyword>
<keyword id="KW-0693">Viral RNA replication</keyword>
<keyword id="KW-1195">Viral transcription</keyword>